<comment type="function">
    <text evidence="2">Receptor that mediates peroxisomal import of proteins containing a C-terminal PTS1-type tripeptide peroxisomal targeting signal (SKL-type). Binds to cargo proteins containing a PTS1 peroxisomal targeting signal in the cytosol, and translocates them into the peroxisome matrix by passing through the PEX13-PEX14 docking complex along with cargo proteins. PEX5 receptor is then retrotranslocated into the cytosol, leading to release of bound cargo in the peroxisome matrix, and reset for a subsequent peroxisome import cycle.</text>
</comment>
<comment type="subunit">
    <text evidence="2">Interacts (via WxxxF/Y and LVxEF motifs) with PEX14; promoting translocation through the PEX13-PEX14 docking complex.</text>
</comment>
<comment type="subcellular location">
    <subcellularLocation>
        <location evidence="2">Cytoplasm</location>
        <location evidence="2">Cytosol</location>
    </subcellularLocation>
    <subcellularLocation>
        <location evidence="2">Peroxisome matrix</location>
    </subcellularLocation>
    <text evidence="2 3">Cycles between the cytosol and the peroxisome matrix. Following binding to cargo proteins containing a PTS1 peroxisomal targeting signal in the cytosol, recruited to the docking complex, composed of PEX13 and PEX14, leading to translocation into the peroxisome matrix along with cargo proteins. Export and recycling to the cytosol is initiated by binding to the PEX2-PEX10-PEX12 ligase complex via its unstructured N-terminus that inserts into the ligase pore and emerges in the cytosol. Cys-10 of PEX5 is then monoubiquitinated, promoting its extraction from peroxisomal membrane by the PEX1-PEX6 AAA ATPase complex (By similarity). Extraction is accompanied by unfolding of the TPR repeats and release of bound cargo in the peroxisome matrix (By similarity). The TPR repeats refold in the cytosol and ubiquitination is removed by deubiquitinating enzyme UBP15, resetting PEX5 for a subsequent import cycle (By similarity).</text>
</comment>
<comment type="domain">
    <text evidence="1">The TPR repeats mediate interaction with proteins containing a C-terminal PTS1-type tripeptide peroxisomal targeting signal (SKL-type).</text>
</comment>
<comment type="domain">
    <text evidence="1">The WxxxF/Y motifs mediate interaction with PEX14, promoting association with the PEX13-PEX14 docking complex.</text>
</comment>
<comment type="domain">
    <text evidence="1">The amphipathic helix 1 and 2 (AH1 and AH2, respectively) are required for PEX5 retrotranslocation and recycling. AH2 mediates interaction with lumenal side of the PEX2-PEX10-PEX12 ligase complex, while AH1 is required for extraction from peroxisomal membrane by the PEX1-PEX6 AAA ATPase complex.</text>
</comment>
<comment type="PTM">
    <text evidence="2">Monoubiquitinated at Cys-10 by PEX2 during PEX5 passage through the retrotranslocation channel: monoubiquitination acts as a signal for PEX5 extraction and is required for proper export from peroxisomes and recycling. When PEX5 recycling is compromised, polyubiquitinated at Lys-22 by PEX10 during its passage through the retrotranslocation channel, leading to its degradation.</text>
</comment>
<comment type="similarity">
    <text evidence="5">Belongs to the peroxisomal targeting signal receptor family.</text>
</comment>
<dbReference type="EMBL" id="CP017626">
    <property type="protein sequence ID" value="AOW28808.1"/>
    <property type="molecule type" value="Genomic_DNA"/>
</dbReference>
<dbReference type="EMBL" id="AJ003115">
    <property type="protein sequence ID" value="CAA05870.1"/>
    <property type="molecule type" value="Genomic_DNA"/>
</dbReference>
<dbReference type="RefSeq" id="XP_713321.1">
    <property type="nucleotide sequence ID" value="XM_708228.2"/>
</dbReference>
<dbReference type="SMR" id="O74711"/>
<dbReference type="FunCoup" id="O74711">
    <property type="interactions" value="105"/>
</dbReference>
<dbReference type="STRING" id="237561.O74711"/>
<dbReference type="EnsemblFungi" id="C4_00150C_A-T">
    <property type="protein sequence ID" value="C4_00150C_A-T-p1"/>
    <property type="gene ID" value="C4_00150C_A"/>
</dbReference>
<dbReference type="GeneID" id="3645026"/>
<dbReference type="KEGG" id="cal:CAALFM_C400150CA"/>
<dbReference type="CGD" id="CAL0000177775">
    <property type="gene designation" value="PEX5"/>
</dbReference>
<dbReference type="VEuPathDB" id="FungiDB:C4_00150C_A"/>
<dbReference type="eggNOG" id="KOG1125">
    <property type="taxonomic scope" value="Eukaryota"/>
</dbReference>
<dbReference type="HOGENOM" id="CLU_013516_3_0_1"/>
<dbReference type="InParanoid" id="O74711"/>
<dbReference type="OrthoDB" id="10006023at2759"/>
<dbReference type="PRO" id="PR:O74711"/>
<dbReference type="Proteomes" id="UP000000559">
    <property type="component" value="Chromosome 4"/>
</dbReference>
<dbReference type="GO" id="GO:0005829">
    <property type="term" value="C:cytosol"/>
    <property type="evidence" value="ECO:0000266"/>
    <property type="project" value="CGD"/>
</dbReference>
<dbReference type="GO" id="GO:0005782">
    <property type="term" value="C:peroxisomal matrix"/>
    <property type="evidence" value="ECO:0007669"/>
    <property type="project" value="UniProtKB-SubCell"/>
</dbReference>
<dbReference type="GO" id="GO:0005778">
    <property type="term" value="C:peroxisomal membrane"/>
    <property type="evidence" value="ECO:0000266"/>
    <property type="project" value="CGD"/>
</dbReference>
<dbReference type="GO" id="GO:0005052">
    <property type="term" value="F:peroxisome matrix targeting signal-1 binding"/>
    <property type="evidence" value="ECO:0000266"/>
    <property type="project" value="CGD"/>
</dbReference>
<dbReference type="GO" id="GO:0030674">
    <property type="term" value="F:protein-macromolecule adaptor activity"/>
    <property type="evidence" value="ECO:0000266"/>
    <property type="project" value="CGD"/>
</dbReference>
<dbReference type="GO" id="GO:0006635">
    <property type="term" value="P:fatty acid beta-oxidation"/>
    <property type="evidence" value="ECO:0000315"/>
    <property type="project" value="CGD"/>
</dbReference>
<dbReference type="GO" id="GO:0006631">
    <property type="term" value="P:fatty acid metabolic process"/>
    <property type="evidence" value="ECO:0000266"/>
    <property type="project" value="CGD"/>
</dbReference>
<dbReference type="GO" id="GO:0016558">
    <property type="term" value="P:protein import into peroxisome matrix"/>
    <property type="evidence" value="ECO:0000315"/>
    <property type="project" value="CGD"/>
</dbReference>
<dbReference type="GO" id="GO:0016560">
    <property type="term" value="P:protein import into peroxisome matrix, docking"/>
    <property type="evidence" value="ECO:0000266"/>
    <property type="project" value="CGD"/>
</dbReference>
<dbReference type="GO" id="GO:0006625">
    <property type="term" value="P:protein targeting to peroxisome"/>
    <property type="evidence" value="ECO:0000315"/>
    <property type="project" value="CGD"/>
</dbReference>
<dbReference type="FunFam" id="1.25.40.10:FF:000218">
    <property type="entry name" value="Peroxisomal targeting signal receptor"/>
    <property type="match status" value="1"/>
</dbReference>
<dbReference type="Gene3D" id="1.25.40.10">
    <property type="entry name" value="Tetratricopeptide repeat domain"/>
    <property type="match status" value="1"/>
</dbReference>
<dbReference type="InterPro" id="IPR024111">
    <property type="entry name" value="PEX5/PEX5L"/>
</dbReference>
<dbReference type="InterPro" id="IPR011990">
    <property type="entry name" value="TPR-like_helical_dom_sf"/>
</dbReference>
<dbReference type="InterPro" id="IPR019734">
    <property type="entry name" value="TPR_rpt"/>
</dbReference>
<dbReference type="PANTHER" id="PTHR10130:SF0">
    <property type="entry name" value="GH08708P"/>
    <property type="match status" value="1"/>
</dbReference>
<dbReference type="PANTHER" id="PTHR10130">
    <property type="entry name" value="PEROXISOMAL TARGETING SIGNAL 1 RECEPTOR PEX5"/>
    <property type="match status" value="1"/>
</dbReference>
<dbReference type="Pfam" id="PF13432">
    <property type="entry name" value="TPR_16"/>
    <property type="match status" value="1"/>
</dbReference>
<dbReference type="SMART" id="SM00028">
    <property type="entry name" value="TPR"/>
    <property type="match status" value="4"/>
</dbReference>
<dbReference type="SUPFAM" id="SSF48452">
    <property type="entry name" value="TPR-like"/>
    <property type="match status" value="1"/>
</dbReference>
<dbReference type="PROSITE" id="PS50005">
    <property type="entry name" value="TPR"/>
    <property type="match status" value="4"/>
</dbReference>
<dbReference type="PROSITE" id="PS50293">
    <property type="entry name" value="TPR_REGION"/>
    <property type="match status" value="1"/>
</dbReference>
<organism>
    <name type="scientific">Candida albicans (strain SC5314 / ATCC MYA-2876)</name>
    <name type="common">Yeast</name>
    <dbReference type="NCBI Taxonomy" id="237561"/>
    <lineage>
        <taxon>Eukaryota</taxon>
        <taxon>Fungi</taxon>
        <taxon>Dikarya</taxon>
        <taxon>Ascomycota</taxon>
        <taxon>Saccharomycotina</taxon>
        <taxon>Pichiomycetes</taxon>
        <taxon>Debaryomycetaceae</taxon>
        <taxon>Candida/Lodderomyces clade</taxon>
        <taxon>Candida</taxon>
    </lineage>
</organism>
<evidence type="ECO:0000250" key="1">
    <source>
        <dbReference type="UniProtKB" id="A0A1L8FDW4"/>
    </source>
</evidence>
<evidence type="ECO:0000250" key="2">
    <source>
        <dbReference type="UniProtKB" id="P35056"/>
    </source>
</evidence>
<evidence type="ECO:0000250" key="3">
    <source>
        <dbReference type="UniProtKB" id="P50542"/>
    </source>
</evidence>
<evidence type="ECO:0000256" key="4">
    <source>
        <dbReference type="SAM" id="MobiDB-lite"/>
    </source>
</evidence>
<evidence type="ECO:0000305" key="5"/>
<accession>O74711</accession>
<accession>A0A1D8PL28</accession>
<accession>Q59UT0</accession>
<reference key="1">
    <citation type="journal article" date="2004" name="Proc. Natl. Acad. Sci. U.S.A.">
        <title>The diploid genome sequence of Candida albicans.</title>
        <authorList>
            <person name="Jones T."/>
            <person name="Federspiel N.A."/>
            <person name="Chibana H."/>
            <person name="Dungan J."/>
            <person name="Kalman S."/>
            <person name="Magee B.B."/>
            <person name="Newport G."/>
            <person name="Thorstenson Y.R."/>
            <person name="Agabian N."/>
            <person name="Magee P.T."/>
            <person name="Davis R.W."/>
            <person name="Scherer S."/>
        </authorList>
    </citation>
    <scope>NUCLEOTIDE SEQUENCE [LARGE SCALE GENOMIC DNA]</scope>
    <source>
        <strain>SC5314 / ATCC MYA-2876</strain>
    </source>
</reference>
<reference key="2">
    <citation type="journal article" date="2007" name="Genome Biol.">
        <title>Assembly of the Candida albicans genome into sixteen supercontigs aligned on the eight chromosomes.</title>
        <authorList>
            <person name="van het Hoog M."/>
            <person name="Rast T.J."/>
            <person name="Martchenko M."/>
            <person name="Grindle S."/>
            <person name="Dignard D."/>
            <person name="Hogues H."/>
            <person name="Cuomo C."/>
            <person name="Berriman M."/>
            <person name="Scherer S."/>
            <person name="Magee B.B."/>
            <person name="Whiteway M."/>
            <person name="Chibana H."/>
            <person name="Nantel A."/>
            <person name="Magee P.T."/>
        </authorList>
    </citation>
    <scope>GENOME REANNOTATION</scope>
    <source>
        <strain>SC5314 / ATCC MYA-2876</strain>
    </source>
</reference>
<reference key="3">
    <citation type="journal article" date="2013" name="Genome Biol.">
        <title>Assembly of a phased diploid Candida albicans genome facilitates allele-specific measurements and provides a simple model for repeat and indel structure.</title>
        <authorList>
            <person name="Muzzey D."/>
            <person name="Schwartz K."/>
            <person name="Weissman J.S."/>
            <person name="Sherlock G."/>
        </authorList>
    </citation>
    <scope>NUCLEOTIDE SEQUENCE [LARGE SCALE GENOMIC DNA]</scope>
    <scope>GENOME REANNOTATION</scope>
    <source>
        <strain>SC5314 / ATCC MYA-2876</strain>
    </source>
</reference>
<reference key="4">
    <citation type="journal article" date="1998" name="Yeast">
        <title>Cloning and sequence of a 3.835 kbp DNA fragment containing the HIS4 gene and a fragment of a PEX5-like gene from Candida albicans.</title>
        <authorList>
            <person name="Navarro-Garcia F."/>
            <person name="Perez-Diaz R."/>
            <person name="Negredo A."/>
            <person name="Pla J."/>
            <person name="Nombela C."/>
        </authorList>
    </citation>
    <scope>NUCLEOTIDE SEQUENCE [GENOMIC DNA] OF 297-592</scope>
    <source>
        <strain>ATCC 64385 / 1001</strain>
    </source>
</reference>
<protein>
    <recommendedName>
        <fullName>Peroxisomal targeting signal receptor</fullName>
        <shortName>PTS1 receptor</shortName>
        <shortName>PTS1R</shortName>
    </recommendedName>
    <alternativeName>
        <fullName>Peroxin-5</fullName>
    </alternativeName>
</protein>
<keyword id="KW-0963">Cytoplasm</keyword>
<keyword id="KW-1017">Isopeptide bond</keyword>
<keyword id="KW-0576">Peroxisome</keyword>
<keyword id="KW-0653">Protein transport</keyword>
<keyword id="KW-1185">Reference proteome</keyword>
<keyword id="KW-0677">Repeat</keyword>
<keyword id="KW-0882">Thioester bond</keyword>
<keyword id="KW-0802">TPR repeat</keyword>
<keyword id="KW-0811">Translocation</keyword>
<keyword id="KW-0813">Transport</keyword>
<keyword id="KW-0832">Ubl conjugation</keyword>
<feature type="chain" id="PRO_0000106308" description="Peroxisomal targeting signal receptor">
    <location>
        <begin position="1"/>
        <end position="592"/>
    </location>
</feature>
<feature type="repeat" description="TPR 1">
    <location>
        <begin position="295"/>
        <end position="329"/>
    </location>
</feature>
<feature type="repeat" description="TPR 2">
    <location>
        <begin position="330"/>
        <end position="363"/>
    </location>
</feature>
<feature type="repeat" description="TPR 3">
    <location>
        <begin position="440"/>
        <end position="473"/>
    </location>
</feature>
<feature type="repeat" description="TPR 4">
    <location>
        <begin position="475"/>
        <end position="507"/>
    </location>
</feature>
<feature type="repeat" description="TPR 5">
    <location>
        <begin position="509"/>
        <end position="541"/>
    </location>
</feature>
<feature type="region of interest" description="Amphipathic helix 1 (AH1)" evidence="1">
    <location>
        <begin position="11"/>
        <end position="33"/>
    </location>
</feature>
<feature type="region of interest" description="Disordered" evidence="4">
    <location>
        <begin position="22"/>
        <end position="49"/>
    </location>
</feature>
<feature type="region of interest" description="Amphipathic helix 2 (AH2)" evidence="1">
    <location>
        <begin position="58"/>
        <end position="76"/>
    </location>
</feature>
<feature type="region of interest" description="Amphipathic helix 4 (AH4)" evidence="1">
    <location>
        <begin position="223"/>
        <end position="239"/>
    </location>
</feature>
<feature type="short sequence motif" description="WxxxF/Y motif 1" evidence="1">
    <location>
        <begin position="100"/>
        <end position="104"/>
    </location>
</feature>
<feature type="short sequence motif" description="WxxxF/Y motif 2" evidence="1">
    <location>
        <begin position="128"/>
        <end position="132"/>
    </location>
</feature>
<feature type="short sequence motif" description="WxxxF/Y motif 3" evidence="1">
    <location>
        <begin position="185"/>
        <end position="189"/>
    </location>
</feature>
<feature type="short sequence motif" description="WxxxF/Y motif 4" evidence="1">
    <location>
        <begin position="262"/>
        <end position="266"/>
    </location>
</feature>
<feature type="compositionally biased region" description="Polar residues" evidence="4">
    <location>
        <begin position="22"/>
        <end position="46"/>
    </location>
</feature>
<feature type="cross-link" description="Glycyl cysteine thioester (Cys-Gly) (interchain with G-Cter in ubiquitin)" evidence="2">
    <location>
        <position position="10"/>
    </location>
</feature>
<feature type="cross-link" description="Glycyl lysine isopeptide (Lys-Gly) (interchain with G-Cter in ubiquitin)" evidence="2">
    <location>
        <position position="22"/>
    </location>
</feature>
<sequence length="592" mass="67324">MSFVGGGSECSVNGNAVAQFNKHTQQDRSLQQQVANQHGNVAQNQGFKKDNLMNVRDRANLDQFMNNGAPQNSFQFQPMRHELNTIQNQPNAIHQQQSNWSQDFVAQSPSAQITTPIAKTGSPVNAQWASEFSQAPATQQHNQRPGQFGPRLGGYRPMMGMSMAYQSQPQQQQQQQHNQEPQVDWENQFKEIEELTNKAEEVEEIQREQSPEIVVDDKYQATFQEVWDSLNSESFENDFINQQYEDFKRTQKDGFPADMNQWEKDFAKYASTRAHFGDYQFEDKQSNQFLDLPKDQDPYEIGLQLMENGAKLSEAALAFEAAIQRDENHVDAWLKLGEVQTQNEKEIAGISALEKCLELHPENSEALMNLAISYINEGYDNAAFATLERWISTKYPQIVEKARQENPTITDEDRFSLNKRVTELFLNAAQLSPNQASMDADVQMGLGVLFYANEEFDKTIDCFKAALSIRPDDAILWNRLGASLANSNRSEEAVDAYFKALQLKPTFVRARYNLGVSCINIGCYKEAAEHLLSGLSMHQVEGVDTVSTLNHNQSTSLTETLKRAFIAMERRDLLELVKPNMDLNQFRGEFSF</sequence>
<name>PEX5_CANAL</name>
<proteinExistence type="inferred from homology"/>
<gene>
    <name type="primary">PEX5</name>
    <name type="ordered locus">CAALFM_C400150CA</name>
    <name type="ORF">CaO19.13085</name>
    <name type="ORF">CaO19.5640</name>
</gene>